<sequence>MTTIKLHNSKTRKKEVFTPIDPDNVQMYVCGPTVYDRAHLGNARPVVVFDVLFRLLRHVYGDKKVTYARNFTDVDDKINTRAAESGRAIGEITSETIQWFLEDMGALGALQPTHMPRATEYIPQMIAMIEELIARDHAYEAEGHVLFAVDSWREGYGQLSGRSVDDMIAGARVEVAPYKKNPMDFVLWKPSDADQPGWESPWGRGRPGWHIECSAMSHDLLGESFDIHCGGNDLMFPHHENEIAQSCCANPEGEFARYWLHNEMLQVEGKKMSKSLGNFFTVRDLLDQGIPGEVVRFVFLQTHYRKPMDWTEKKAAEAEATLRKWRALTAGIEPAATAAAAVVDALSDDLNTAGAIAEMHKLAAAGDGAGLLAAGQLVGLLGDEMGEWAAAPSVDLSAHEARLFKARQAAMETKDFSEVDRLKAAYTEAGLEVRMSKTGVELVPGAGFDAAKLEALS</sequence>
<feature type="chain" id="PRO_0000332907" description="Cysteine--tRNA ligase">
    <location>
        <begin position="1"/>
        <end position="457"/>
    </location>
</feature>
<feature type="short sequence motif" description="'HIGH' region">
    <location>
        <begin position="32"/>
        <end position="42"/>
    </location>
</feature>
<feature type="short sequence motif" description="'KMSKS' region">
    <location>
        <begin position="271"/>
        <end position="275"/>
    </location>
</feature>
<feature type="binding site" evidence="1">
    <location>
        <position position="30"/>
    </location>
    <ligand>
        <name>Zn(2+)</name>
        <dbReference type="ChEBI" id="CHEBI:29105"/>
    </ligand>
</feature>
<feature type="binding site" evidence="1">
    <location>
        <position position="213"/>
    </location>
    <ligand>
        <name>Zn(2+)</name>
        <dbReference type="ChEBI" id="CHEBI:29105"/>
    </ligand>
</feature>
<feature type="binding site" evidence="1">
    <location>
        <position position="238"/>
    </location>
    <ligand>
        <name>Zn(2+)</name>
        <dbReference type="ChEBI" id="CHEBI:29105"/>
    </ligand>
</feature>
<feature type="binding site" evidence="1">
    <location>
        <position position="242"/>
    </location>
    <ligand>
        <name>Zn(2+)</name>
        <dbReference type="ChEBI" id="CHEBI:29105"/>
    </ligand>
</feature>
<feature type="binding site" evidence="1">
    <location>
        <position position="274"/>
    </location>
    <ligand>
        <name>ATP</name>
        <dbReference type="ChEBI" id="CHEBI:30616"/>
    </ligand>
</feature>
<evidence type="ECO:0000255" key="1">
    <source>
        <dbReference type="HAMAP-Rule" id="MF_00041"/>
    </source>
</evidence>
<organism>
    <name type="scientific">Ruegeria sp. (strain TM1040)</name>
    <name type="common">Silicibacter sp.</name>
    <dbReference type="NCBI Taxonomy" id="292414"/>
    <lineage>
        <taxon>Bacteria</taxon>
        <taxon>Pseudomonadati</taxon>
        <taxon>Pseudomonadota</taxon>
        <taxon>Alphaproteobacteria</taxon>
        <taxon>Rhodobacterales</taxon>
        <taxon>Roseobacteraceae</taxon>
        <taxon>Ruegeria</taxon>
    </lineage>
</organism>
<dbReference type="EC" id="6.1.1.16" evidence="1"/>
<dbReference type="EMBL" id="CP000377">
    <property type="protein sequence ID" value="ABF63886.1"/>
    <property type="molecule type" value="Genomic_DNA"/>
</dbReference>
<dbReference type="RefSeq" id="WP_011538493.1">
    <property type="nucleotide sequence ID" value="NC_008044.1"/>
</dbReference>
<dbReference type="SMR" id="Q1GHI0"/>
<dbReference type="STRING" id="292414.TM1040_1153"/>
<dbReference type="KEGG" id="sit:TM1040_1153"/>
<dbReference type="eggNOG" id="COG0215">
    <property type="taxonomic scope" value="Bacteria"/>
</dbReference>
<dbReference type="HOGENOM" id="CLU_013528_0_1_5"/>
<dbReference type="OrthoDB" id="9815130at2"/>
<dbReference type="Proteomes" id="UP000000636">
    <property type="component" value="Chromosome"/>
</dbReference>
<dbReference type="GO" id="GO:0005829">
    <property type="term" value="C:cytosol"/>
    <property type="evidence" value="ECO:0007669"/>
    <property type="project" value="TreeGrafter"/>
</dbReference>
<dbReference type="GO" id="GO:0005524">
    <property type="term" value="F:ATP binding"/>
    <property type="evidence" value="ECO:0007669"/>
    <property type="project" value="UniProtKB-UniRule"/>
</dbReference>
<dbReference type="GO" id="GO:0004817">
    <property type="term" value="F:cysteine-tRNA ligase activity"/>
    <property type="evidence" value="ECO:0007669"/>
    <property type="project" value="UniProtKB-UniRule"/>
</dbReference>
<dbReference type="GO" id="GO:0008270">
    <property type="term" value="F:zinc ion binding"/>
    <property type="evidence" value="ECO:0007669"/>
    <property type="project" value="UniProtKB-UniRule"/>
</dbReference>
<dbReference type="GO" id="GO:0006423">
    <property type="term" value="P:cysteinyl-tRNA aminoacylation"/>
    <property type="evidence" value="ECO:0007669"/>
    <property type="project" value="UniProtKB-UniRule"/>
</dbReference>
<dbReference type="CDD" id="cd00672">
    <property type="entry name" value="CysRS_core"/>
    <property type="match status" value="1"/>
</dbReference>
<dbReference type="FunFam" id="3.40.50.620:FF:000068">
    <property type="entry name" value="Cysteine--tRNA ligase"/>
    <property type="match status" value="1"/>
</dbReference>
<dbReference type="Gene3D" id="3.40.50.620">
    <property type="entry name" value="HUPs"/>
    <property type="match status" value="1"/>
</dbReference>
<dbReference type="HAMAP" id="MF_00041">
    <property type="entry name" value="Cys_tRNA_synth"/>
    <property type="match status" value="1"/>
</dbReference>
<dbReference type="InterPro" id="IPR015803">
    <property type="entry name" value="Cys-tRNA-ligase"/>
</dbReference>
<dbReference type="InterPro" id="IPR015273">
    <property type="entry name" value="Cys-tRNA-synt_Ia_DALR"/>
</dbReference>
<dbReference type="InterPro" id="IPR024909">
    <property type="entry name" value="Cys-tRNA/MSH_ligase"/>
</dbReference>
<dbReference type="InterPro" id="IPR056411">
    <property type="entry name" value="CysS_C"/>
</dbReference>
<dbReference type="InterPro" id="IPR014729">
    <property type="entry name" value="Rossmann-like_a/b/a_fold"/>
</dbReference>
<dbReference type="InterPro" id="IPR032678">
    <property type="entry name" value="tRNA-synt_1_cat_dom"/>
</dbReference>
<dbReference type="InterPro" id="IPR009080">
    <property type="entry name" value="tRNAsynth_Ia_anticodon-bd"/>
</dbReference>
<dbReference type="NCBIfam" id="TIGR00435">
    <property type="entry name" value="cysS"/>
    <property type="match status" value="1"/>
</dbReference>
<dbReference type="PANTHER" id="PTHR10890:SF3">
    <property type="entry name" value="CYSTEINE--TRNA LIGASE, CYTOPLASMIC"/>
    <property type="match status" value="1"/>
</dbReference>
<dbReference type="PANTHER" id="PTHR10890">
    <property type="entry name" value="CYSTEINYL-TRNA SYNTHETASE"/>
    <property type="match status" value="1"/>
</dbReference>
<dbReference type="Pfam" id="PF23493">
    <property type="entry name" value="CysS_C"/>
    <property type="match status" value="1"/>
</dbReference>
<dbReference type="Pfam" id="PF01406">
    <property type="entry name" value="tRNA-synt_1e"/>
    <property type="match status" value="1"/>
</dbReference>
<dbReference type="PRINTS" id="PR00983">
    <property type="entry name" value="TRNASYNTHCYS"/>
</dbReference>
<dbReference type="SMART" id="SM00840">
    <property type="entry name" value="DALR_2"/>
    <property type="match status" value="1"/>
</dbReference>
<dbReference type="SUPFAM" id="SSF47323">
    <property type="entry name" value="Anticodon-binding domain of a subclass of class I aminoacyl-tRNA synthetases"/>
    <property type="match status" value="1"/>
</dbReference>
<dbReference type="SUPFAM" id="SSF52374">
    <property type="entry name" value="Nucleotidylyl transferase"/>
    <property type="match status" value="1"/>
</dbReference>
<proteinExistence type="inferred from homology"/>
<accession>Q1GHI0</accession>
<name>SYC_RUEST</name>
<reference key="1">
    <citation type="submission" date="2006-05" db="EMBL/GenBank/DDBJ databases">
        <title>Complete sequence of chromosome of Silicibacter sp. TM1040.</title>
        <authorList>
            <consortium name="US DOE Joint Genome Institute"/>
            <person name="Copeland A."/>
            <person name="Lucas S."/>
            <person name="Lapidus A."/>
            <person name="Barry K."/>
            <person name="Detter J.C."/>
            <person name="Glavina del Rio T."/>
            <person name="Hammon N."/>
            <person name="Israni S."/>
            <person name="Dalin E."/>
            <person name="Tice H."/>
            <person name="Pitluck S."/>
            <person name="Brettin T."/>
            <person name="Bruce D."/>
            <person name="Han C."/>
            <person name="Tapia R."/>
            <person name="Goodwin L."/>
            <person name="Thompson L.S."/>
            <person name="Gilna P."/>
            <person name="Schmutz J."/>
            <person name="Larimer F."/>
            <person name="Land M."/>
            <person name="Hauser L."/>
            <person name="Kyrpides N."/>
            <person name="Kim E."/>
            <person name="Belas R."/>
            <person name="Moran M.A."/>
            <person name="Buchan A."/>
            <person name="Gonzalez J.M."/>
            <person name="Schell M.A."/>
            <person name="Sun F."/>
            <person name="Richardson P."/>
        </authorList>
    </citation>
    <scope>NUCLEOTIDE SEQUENCE [LARGE SCALE GENOMIC DNA]</scope>
    <source>
        <strain>TM1040</strain>
    </source>
</reference>
<protein>
    <recommendedName>
        <fullName evidence="1">Cysteine--tRNA ligase</fullName>
        <ecNumber evidence="1">6.1.1.16</ecNumber>
    </recommendedName>
    <alternativeName>
        <fullName evidence="1">Cysteinyl-tRNA synthetase</fullName>
        <shortName evidence="1">CysRS</shortName>
    </alternativeName>
</protein>
<keyword id="KW-0030">Aminoacyl-tRNA synthetase</keyword>
<keyword id="KW-0067">ATP-binding</keyword>
<keyword id="KW-0963">Cytoplasm</keyword>
<keyword id="KW-0436">Ligase</keyword>
<keyword id="KW-0479">Metal-binding</keyword>
<keyword id="KW-0547">Nucleotide-binding</keyword>
<keyword id="KW-0648">Protein biosynthesis</keyword>
<keyword id="KW-1185">Reference proteome</keyword>
<keyword id="KW-0862">Zinc</keyword>
<gene>
    <name evidence="1" type="primary">cysS</name>
    <name type="ordered locus">TM1040_1153</name>
</gene>
<comment type="catalytic activity">
    <reaction evidence="1">
        <text>tRNA(Cys) + L-cysteine + ATP = L-cysteinyl-tRNA(Cys) + AMP + diphosphate</text>
        <dbReference type="Rhea" id="RHEA:17773"/>
        <dbReference type="Rhea" id="RHEA-COMP:9661"/>
        <dbReference type="Rhea" id="RHEA-COMP:9679"/>
        <dbReference type="ChEBI" id="CHEBI:30616"/>
        <dbReference type="ChEBI" id="CHEBI:33019"/>
        <dbReference type="ChEBI" id="CHEBI:35235"/>
        <dbReference type="ChEBI" id="CHEBI:78442"/>
        <dbReference type="ChEBI" id="CHEBI:78517"/>
        <dbReference type="ChEBI" id="CHEBI:456215"/>
        <dbReference type="EC" id="6.1.1.16"/>
    </reaction>
</comment>
<comment type="cofactor">
    <cofactor evidence="1">
        <name>Zn(2+)</name>
        <dbReference type="ChEBI" id="CHEBI:29105"/>
    </cofactor>
    <text evidence="1">Binds 1 zinc ion per subunit.</text>
</comment>
<comment type="subunit">
    <text evidence="1">Monomer.</text>
</comment>
<comment type="subcellular location">
    <subcellularLocation>
        <location evidence="1">Cytoplasm</location>
    </subcellularLocation>
</comment>
<comment type="similarity">
    <text evidence="1">Belongs to the class-I aminoacyl-tRNA synthetase family.</text>
</comment>